<feature type="signal peptide" evidence="3">
    <location>
        <begin position="1"/>
        <end position="21"/>
    </location>
</feature>
<feature type="propeptide" id="PRO_0000006917" evidence="1">
    <location>
        <begin position="22"/>
        <end position="32"/>
    </location>
</feature>
<feature type="peptide" id="PRO_0000006918" description="Beta-defensin 1">
    <location>
        <begin position="33"/>
        <end position="68"/>
    </location>
</feature>
<feature type="disulfide bond" evidence="1">
    <location>
        <begin position="37"/>
        <end position="66"/>
    </location>
</feature>
<feature type="disulfide bond" evidence="1">
    <location>
        <begin position="44"/>
        <end position="59"/>
    </location>
</feature>
<feature type="disulfide bond" evidence="1">
    <location>
        <begin position="49"/>
        <end position="67"/>
    </location>
</feature>
<sequence length="68" mass="7562">MRTSYLLLFTLCLLMSEMASGDNFLTGLGHRSDHYNCVRSGGQCLYSACPIYTKIQGTCYHGKAKCCK</sequence>
<name>DEFB1_TRACR</name>
<keyword id="KW-0044">Antibiotic</keyword>
<keyword id="KW-0929">Antimicrobial</keyword>
<keyword id="KW-0211">Defensin</keyword>
<keyword id="KW-1015">Disulfide bond</keyword>
<keyword id="KW-0472">Membrane</keyword>
<keyword id="KW-0964">Secreted</keyword>
<keyword id="KW-0732">Signal</keyword>
<proteinExistence type="inferred from homology"/>
<dbReference type="EMBL" id="AY033755">
    <property type="protein sequence ID" value="AAK61467.1"/>
    <property type="molecule type" value="Genomic_DNA"/>
</dbReference>
<dbReference type="EMBL" id="AY033740">
    <property type="protein sequence ID" value="AAK61467.1"/>
    <property type="status" value="JOINED"/>
    <property type="molecule type" value="Genomic_DNA"/>
</dbReference>
<dbReference type="SMR" id="Q7JGM0"/>
<dbReference type="GO" id="GO:0005615">
    <property type="term" value="C:extracellular space"/>
    <property type="evidence" value="ECO:0007669"/>
    <property type="project" value="TreeGrafter"/>
</dbReference>
<dbReference type="GO" id="GO:0016020">
    <property type="term" value="C:membrane"/>
    <property type="evidence" value="ECO:0000250"/>
    <property type="project" value="UniProtKB"/>
</dbReference>
<dbReference type="GO" id="GO:1990742">
    <property type="term" value="C:microvesicle"/>
    <property type="evidence" value="ECO:0000250"/>
    <property type="project" value="UniProtKB"/>
</dbReference>
<dbReference type="GO" id="GO:0097225">
    <property type="term" value="C:sperm midpiece"/>
    <property type="evidence" value="ECO:0000250"/>
    <property type="project" value="UniProtKB"/>
</dbReference>
<dbReference type="GO" id="GO:0031731">
    <property type="term" value="F:CCR6 chemokine receptor binding"/>
    <property type="evidence" value="ECO:0000250"/>
    <property type="project" value="UniProtKB"/>
</dbReference>
<dbReference type="GO" id="GO:0042802">
    <property type="term" value="F:identical protein binding"/>
    <property type="evidence" value="ECO:0000250"/>
    <property type="project" value="UniProtKB"/>
</dbReference>
<dbReference type="GO" id="GO:0019722">
    <property type="term" value="P:calcium-mediated signaling"/>
    <property type="evidence" value="ECO:0000250"/>
    <property type="project" value="UniProtKB"/>
</dbReference>
<dbReference type="GO" id="GO:0050829">
    <property type="term" value="P:defense response to Gram-negative bacterium"/>
    <property type="evidence" value="ECO:0000250"/>
    <property type="project" value="UniProtKB"/>
</dbReference>
<dbReference type="GO" id="GO:0050830">
    <property type="term" value="P:defense response to Gram-positive bacterium"/>
    <property type="evidence" value="ECO:0000250"/>
    <property type="project" value="UniProtKB"/>
</dbReference>
<dbReference type="GO" id="GO:0002227">
    <property type="term" value="P:innate immune response in mucosa"/>
    <property type="evidence" value="ECO:0007669"/>
    <property type="project" value="TreeGrafter"/>
</dbReference>
<dbReference type="GO" id="GO:0060474">
    <property type="term" value="P:positive regulation of flagellated sperm motility involved in capacitation"/>
    <property type="evidence" value="ECO:0000250"/>
    <property type="project" value="UniProtKB"/>
</dbReference>
<dbReference type="FunFam" id="3.10.360.10:FF:000001">
    <property type="entry name" value="Beta-defensin 1"/>
    <property type="match status" value="1"/>
</dbReference>
<dbReference type="Gene3D" id="3.10.360.10">
    <property type="entry name" value="Antimicrobial Peptide, Beta-defensin 2, Chain A"/>
    <property type="match status" value="1"/>
</dbReference>
<dbReference type="InterPro" id="IPR001855">
    <property type="entry name" value="Defensin_beta-like"/>
</dbReference>
<dbReference type="PANTHER" id="PTHR21388:SF9">
    <property type="entry name" value="BETA-DEFENSIN 1"/>
    <property type="match status" value="1"/>
</dbReference>
<dbReference type="PANTHER" id="PTHR21388">
    <property type="entry name" value="BETA-DEFENSIN-RELATED"/>
    <property type="match status" value="1"/>
</dbReference>
<dbReference type="Pfam" id="PF00711">
    <property type="entry name" value="Defensin_beta"/>
    <property type="match status" value="1"/>
</dbReference>
<dbReference type="SUPFAM" id="SSF57392">
    <property type="entry name" value="Defensin-like"/>
    <property type="match status" value="1"/>
</dbReference>
<protein>
    <recommendedName>
        <fullName>Beta-defensin 1</fullName>
        <shortName>BD-1</shortName>
    </recommendedName>
    <alternativeName>
        <fullName>Defensin, beta 1</fullName>
    </alternativeName>
</protein>
<organism>
    <name type="scientific">Trachypithecus cristatus</name>
    <name type="common">Silvered leaf-monkey</name>
    <name type="synonym">Presbytis cristata</name>
    <dbReference type="NCBI Taxonomy" id="122765"/>
    <lineage>
        <taxon>Eukaryota</taxon>
        <taxon>Metazoa</taxon>
        <taxon>Chordata</taxon>
        <taxon>Craniata</taxon>
        <taxon>Vertebrata</taxon>
        <taxon>Euteleostomi</taxon>
        <taxon>Mammalia</taxon>
        <taxon>Eutheria</taxon>
        <taxon>Euarchontoglires</taxon>
        <taxon>Primates</taxon>
        <taxon>Haplorrhini</taxon>
        <taxon>Catarrhini</taxon>
        <taxon>Cercopithecidae</taxon>
        <taxon>Colobinae</taxon>
        <taxon>Trachypithecus</taxon>
    </lineage>
</organism>
<accession>Q7JGM0</accession>
<reference key="1">
    <citation type="journal article" date="2002" name="Immunogenetics">
        <title>Beta-defensin 1 gene variability among non-human primates.</title>
        <authorList>
            <person name="Del Pero M."/>
            <person name="Boniotto M."/>
            <person name="Zuccon D."/>
            <person name="Cervella P."/>
            <person name="Spano A."/>
            <person name="Amoroso A."/>
            <person name="Crovella S."/>
        </authorList>
    </citation>
    <scope>NUCLEOTIDE SEQUENCE [GENOMIC DNA]</scope>
</reference>
<evidence type="ECO:0000250" key="1"/>
<evidence type="ECO:0000250" key="2">
    <source>
        <dbReference type="UniProtKB" id="P60022"/>
    </source>
</evidence>
<evidence type="ECO:0000255" key="3"/>
<evidence type="ECO:0000305" key="4"/>
<gene>
    <name type="primary">DEFB1</name>
</gene>
<comment type="function">
    <text evidence="2">Has bactericidal activity. May act as a ligand for C-C chemokine receptor CCR6. Positively regulates the sperm motility and bactericidal activity in a CCR6-dependent manner. Binds to CCR6 and triggers Ca2+ mobilization in the sperm which is important for its motility.</text>
</comment>
<comment type="subunit">
    <text evidence="2">Monomer. Homodimer.</text>
</comment>
<comment type="subcellular location">
    <subcellularLocation>
        <location evidence="2">Secreted</location>
    </subcellularLocation>
    <subcellularLocation>
        <location evidence="2">Membrane</location>
    </subcellularLocation>
    <text evidence="2">Associates with tumor cell membrane-derived microvesicles.</text>
</comment>
<comment type="similarity">
    <text evidence="4">Belongs to the beta-defensin family.</text>
</comment>